<comment type="function">
    <text evidence="1">Required for the formation of a threonylcarbamoyl group on adenosine at position 37 (t(6)A37) in tRNAs that read codons beginning with adenine. Is involved in the transfer of the threonylcarbamoyl moiety of threonylcarbamoyl-AMP (TC-AMP) to the N6 group of A37, together with TsaE and TsaB. TsaD likely plays a direct catalytic role in this reaction.</text>
</comment>
<comment type="catalytic activity">
    <reaction evidence="1">
        <text>L-threonylcarbamoyladenylate + adenosine(37) in tRNA = N(6)-L-threonylcarbamoyladenosine(37) in tRNA + AMP + H(+)</text>
        <dbReference type="Rhea" id="RHEA:37059"/>
        <dbReference type="Rhea" id="RHEA-COMP:10162"/>
        <dbReference type="Rhea" id="RHEA-COMP:10163"/>
        <dbReference type="ChEBI" id="CHEBI:15378"/>
        <dbReference type="ChEBI" id="CHEBI:73682"/>
        <dbReference type="ChEBI" id="CHEBI:74411"/>
        <dbReference type="ChEBI" id="CHEBI:74418"/>
        <dbReference type="ChEBI" id="CHEBI:456215"/>
        <dbReference type="EC" id="2.3.1.234"/>
    </reaction>
</comment>
<comment type="cofactor">
    <cofactor evidence="1">
        <name>Fe(2+)</name>
        <dbReference type="ChEBI" id="CHEBI:29033"/>
    </cofactor>
    <text evidence="1">Binds 1 Fe(2+) ion per subunit.</text>
</comment>
<comment type="subcellular location">
    <subcellularLocation>
        <location evidence="1">Cytoplasm</location>
    </subcellularLocation>
</comment>
<comment type="similarity">
    <text evidence="1">Belongs to the KAE1 / TsaD family.</text>
</comment>
<evidence type="ECO:0000255" key="1">
    <source>
        <dbReference type="HAMAP-Rule" id="MF_01445"/>
    </source>
</evidence>
<name>TSAD_VESOH</name>
<sequence length="341" mass="36849">MAKLDFITLGIESSCDETGVGLYHSELGLIGHKLFSSVEIHSEYGGVVPELASRDHIQRVLPLIKTVLTNAKFTLQDLSGIAYTAGPGLAGALLVGSALAKSLAWSLGVPSLAVHHMEGHLLAPLLEESQPKFPFVALLVSGGHTMLIDVKAIGQYKILGKSLDDAVGEAFDKTAKILGLGYPGGPALEMLAKQGDTNTFKFPLPMVNRPGLDFSFSGLKTFARNTFTKHPNKKSDIAKAFEVATTQILMIKCRRALEKTGRITLVVAGGVSANLSLRSELNQMGRKVGVNIFYPRQEFCTDNGAMIALAGHFRLSDGQCDTNYEINIKPRWNIEELSQIK</sequence>
<protein>
    <recommendedName>
        <fullName evidence="1">tRNA N6-adenosine threonylcarbamoyltransferase</fullName>
        <ecNumber evidence="1">2.3.1.234</ecNumber>
    </recommendedName>
    <alternativeName>
        <fullName evidence="1">N6-L-threonylcarbamoyladenine synthase</fullName>
        <shortName evidence="1">t(6)A synthase</shortName>
    </alternativeName>
    <alternativeName>
        <fullName evidence="1">t(6)A37 threonylcarbamoyladenosine biosynthesis protein TsaD</fullName>
    </alternativeName>
    <alternativeName>
        <fullName evidence="1">tRNA threonylcarbamoyladenosine biosynthesis protein TsaD</fullName>
    </alternativeName>
</protein>
<dbReference type="EC" id="2.3.1.234" evidence="1"/>
<dbReference type="EMBL" id="AP009247">
    <property type="protein sequence ID" value="BAF61983.1"/>
    <property type="molecule type" value="Genomic_DNA"/>
</dbReference>
<dbReference type="RefSeq" id="WP_011930252.1">
    <property type="nucleotide sequence ID" value="NC_009465.1"/>
</dbReference>
<dbReference type="SMR" id="A5CVM3"/>
<dbReference type="STRING" id="412965.COSY_0878"/>
<dbReference type="KEGG" id="vok:COSY_0878"/>
<dbReference type="eggNOG" id="COG0533">
    <property type="taxonomic scope" value="Bacteria"/>
</dbReference>
<dbReference type="HOGENOM" id="CLU_023208_0_0_6"/>
<dbReference type="OrthoDB" id="9806197at2"/>
<dbReference type="Proteomes" id="UP000000247">
    <property type="component" value="Chromosome"/>
</dbReference>
<dbReference type="GO" id="GO:0005737">
    <property type="term" value="C:cytoplasm"/>
    <property type="evidence" value="ECO:0007669"/>
    <property type="project" value="UniProtKB-SubCell"/>
</dbReference>
<dbReference type="GO" id="GO:0005506">
    <property type="term" value="F:iron ion binding"/>
    <property type="evidence" value="ECO:0007669"/>
    <property type="project" value="UniProtKB-UniRule"/>
</dbReference>
<dbReference type="GO" id="GO:0061711">
    <property type="term" value="F:N(6)-L-threonylcarbamoyladenine synthase activity"/>
    <property type="evidence" value="ECO:0007669"/>
    <property type="project" value="UniProtKB-EC"/>
</dbReference>
<dbReference type="GO" id="GO:0002949">
    <property type="term" value="P:tRNA threonylcarbamoyladenosine modification"/>
    <property type="evidence" value="ECO:0007669"/>
    <property type="project" value="UniProtKB-UniRule"/>
</dbReference>
<dbReference type="CDD" id="cd24133">
    <property type="entry name" value="ASKHA_NBD_TsaD_bac"/>
    <property type="match status" value="1"/>
</dbReference>
<dbReference type="FunFam" id="3.30.420.40:FF:000040">
    <property type="entry name" value="tRNA N6-adenosine threonylcarbamoyltransferase"/>
    <property type="match status" value="1"/>
</dbReference>
<dbReference type="Gene3D" id="3.30.420.40">
    <property type="match status" value="2"/>
</dbReference>
<dbReference type="HAMAP" id="MF_01445">
    <property type="entry name" value="TsaD"/>
    <property type="match status" value="1"/>
</dbReference>
<dbReference type="InterPro" id="IPR043129">
    <property type="entry name" value="ATPase_NBD"/>
</dbReference>
<dbReference type="InterPro" id="IPR000905">
    <property type="entry name" value="Gcp-like_dom"/>
</dbReference>
<dbReference type="InterPro" id="IPR017861">
    <property type="entry name" value="KAE1/TsaD"/>
</dbReference>
<dbReference type="InterPro" id="IPR017860">
    <property type="entry name" value="Peptidase_M22_CS"/>
</dbReference>
<dbReference type="InterPro" id="IPR022450">
    <property type="entry name" value="TsaD"/>
</dbReference>
<dbReference type="NCBIfam" id="TIGR00329">
    <property type="entry name" value="gcp_kae1"/>
    <property type="match status" value="1"/>
</dbReference>
<dbReference type="NCBIfam" id="TIGR03723">
    <property type="entry name" value="T6A_TsaD_YgjD"/>
    <property type="match status" value="1"/>
</dbReference>
<dbReference type="PANTHER" id="PTHR11735">
    <property type="entry name" value="TRNA N6-ADENOSINE THREONYLCARBAMOYLTRANSFERASE"/>
    <property type="match status" value="1"/>
</dbReference>
<dbReference type="PANTHER" id="PTHR11735:SF6">
    <property type="entry name" value="TRNA N6-ADENOSINE THREONYLCARBAMOYLTRANSFERASE, MITOCHONDRIAL"/>
    <property type="match status" value="1"/>
</dbReference>
<dbReference type="Pfam" id="PF00814">
    <property type="entry name" value="TsaD"/>
    <property type="match status" value="1"/>
</dbReference>
<dbReference type="PRINTS" id="PR00789">
    <property type="entry name" value="OSIALOPTASE"/>
</dbReference>
<dbReference type="SUPFAM" id="SSF53067">
    <property type="entry name" value="Actin-like ATPase domain"/>
    <property type="match status" value="2"/>
</dbReference>
<dbReference type="PROSITE" id="PS01016">
    <property type="entry name" value="GLYCOPROTEASE"/>
    <property type="match status" value="1"/>
</dbReference>
<keyword id="KW-0012">Acyltransferase</keyword>
<keyword id="KW-0963">Cytoplasm</keyword>
<keyword id="KW-0408">Iron</keyword>
<keyword id="KW-0479">Metal-binding</keyword>
<keyword id="KW-1185">Reference proteome</keyword>
<keyword id="KW-0808">Transferase</keyword>
<keyword id="KW-0819">tRNA processing</keyword>
<proteinExistence type="inferred from homology"/>
<reference key="1">
    <citation type="journal article" date="2007" name="Curr. Biol.">
        <title>Reduced genome of the thioautotrophic intracellular symbiont in a deep-sea clam, Calyptogena okutanii.</title>
        <authorList>
            <person name="Kuwahara H."/>
            <person name="Yoshida T."/>
            <person name="Takaki Y."/>
            <person name="Shimamura S."/>
            <person name="Nishi S."/>
            <person name="Harada M."/>
            <person name="Matsuyama K."/>
            <person name="Takishita K."/>
            <person name="Kawato M."/>
            <person name="Uematsu K."/>
            <person name="Fujiwara Y."/>
            <person name="Sato T."/>
            <person name="Kato C."/>
            <person name="Kitagawa M."/>
            <person name="Kato I."/>
            <person name="Maruyama T."/>
        </authorList>
    </citation>
    <scope>NUCLEOTIDE SEQUENCE [LARGE SCALE GENOMIC DNA]</scope>
    <source>
        <strain>HA</strain>
    </source>
</reference>
<organism>
    <name type="scientific">Vesicomyosocius okutanii subsp. Calyptogena okutanii (strain HA)</name>
    <dbReference type="NCBI Taxonomy" id="412965"/>
    <lineage>
        <taxon>Bacteria</taxon>
        <taxon>Pseudomonadati</taxon>
        <taxon>Pseudomonadota</taxon>
        <taxon>Gammaproteobacteria</taxon>
        <taxon>Candidatus Pseudothioglobaceae</taxon>
        <taxon>Candidatus Vesicomyosocius</taxon>
    </lineage>
</organism>
<accession>A5CVM3</accession>
<feature type="chain" id="PRO_0000303607" description="tRNA N6-adenosine threonylcarbamoyltransferase">
    <location>
        <begin position="1"/>
        <end position="341"/>
    </location>
</feature>
<feature type="binding site" evidence="1">
    <location>
        <position position="116"/>
    </location>
    <ligand>
        <name>Fe cation</name>
        <dbReference type="ChEBI" id="CHEBI:24875"/>
    </ligand>
</feature>
<feature type="binding site" evidence="1">
    <location>
        <position position="120"/>
    </location>
    <ligand>
        <name>Fe cation</name>
        <dbReference type="ChEBI" id="CHEBI:24875"/>
    </ligand>
</feature>
<feature type="binding site" evidence="1">
    <location>
        <begin position="139"/>
        <end position="143"/>
    </location>
    <ligand>
        <name>substrate</name>
    </ligand>
</feature>
<feature type="binding site" evidence="1">
    <location>
        <position position="172"/>
    </location>
    <ligand>
        <name>substrate</name>
    </ligand>
</feature>
<feature type="binding site" evidence="1">
    <location>
        <position position="185"/>
    </location>
    <ligand>
        <name>substrate</name>
    </ligand>
</feature>
<feature type="binding site" evidence="1">
    <location>
        <position position="274"/>
    </location>
    <ligand>
        <name>substrate</name>
    </ligand>
</feature>
<feature type="binding site" evidence="1">
    <location>
        <position position="302"/>
    </location>
    <ligand>
        <name>Fe cation</name>
        <dbReference type="ChEBI" id="CHEBI:24875"/>
    </ligand>
</feature>
<gene>
    <name evidence="1" type="primary">tsaD</name>
    <name type="synonym">gcp</name>
    <name type="ordered locus">COSY_0878</name>
</gene>